<proteinExistence type="evidence at protein level"/>
<protein>
    <recommendedName>
        <fullName evidence="10 11">Flavin-dependent thymidylate synthase</fullName>
        <shortName evidence="14">FDTS</shortName>
        <ecNumber evidence="7">2.1.1.148</ecNumber>
    </recommendedName>
    <alternativeName>
        <fullName evidence="12">FAD-dependent thymidylate synthase</fullName>
    </alternativeName>
    <alternativeName>
        <fullName evidence="13">Thymidylate synthase ThyX</fullName>
        <shortName evidence="13">TS</shortName>
        <shortName evidence="1">TSase</shortName>
    </alternativeName>
</protein>
<accession>P9WG57</accession>
<accession>L0TD90</accession>
<accession>O33296</accession>
<accession>P66930</accession>
<keyword id="KW-0002">3D-structure</keyword>
<keyword id="KW-0274">FAD</keyword>
<keyword id="KW-0285">Flavoprotein</keyword>
<keyword id="KW-0489">Methyltransferase</keyword>
<keyword id="KW-0521">NADP</keyword>
<keyword id="KW-0545">Nucleotide biosynthesis</keyword>
<keyword id="KW-1185">Reference proteome</keyword>
<keyword id="KW-0808">Transferase</keyword>
<reference key="1">
    <citation type="journal article" date="1998" name="Nature">
        <title>Deciphering the biology of Mycobacterium tuberculosis from the complete genome sequence.</title>
        <authorList>
            <person name="Cole S.T."/>
            <person name="Brosch R."/>
            <person name="Parkhill J."/>
            <person name="Garnier T."/>
            <person name="Churcher C.M."/>
            <person name="Harris D.E."/>
            <person name="Gordon S.V."/>
            <person name="Eiglmeier K."/>
            <person name="Gas S."/>
            <person name="Barry C.E. III"/>
            <person name="Tekaia F."/>
            <person name="Badcock K."/>
            <person name="Basham D."/>
            <person name="Brown D."/>
            <person name="Chillingworth T."/>
            <person name="Connor R."/>
            <person name="Davies R.M."/>
            <person name="Devlin K."/>
            <person name="Feltwell T."/>
            <person name="Gentles S."/>
            <person name="Hamlin N."/>
            <person name="Holroyd S."/>
            <person name="Hornsby T."/>
            <person name="Jagels K."/>
            <person name="Krogh A."/>
            <person name="McLean J."/>
            <person name="Moule S."/>
            <person name="Murphy L.D."/>
            <person name="Oliver S."/>
            <person name="Osborne J."/>
            <person name="Quail M.A."/>
            <person name="Rajandream M.A."/>
            <person name="Rogers J."/>
            <person name="Rutter S."/>
            <person name="Seeger K."/>
            <person name="Skelton S."/>
            <person name="Squares S."/>
            <person name="Squares R."/>
            <person name="Sulston J.E."/>
            <person name="Taylor K."/>
            <person name="Whitehead S."/>
            <person name="Barrell B.G."/>
        </authorList>
    </citation>
    <scope>NUCLEOTIDE SEQUENCE [LARGE SCALE GENOMIC DNA]</scope>
    <source>
        <strain>ATCC 25618 / H37Rv</strain>
    </source>
</reference>
<reference key="2">
    <citation type="journal article" date="2003" name="Mol. Microbiol.">
        <title>Genes required for mycobacterial growth defined by high density mutagenesis.</title>
        <authorList>
            <person name="Sassetti C.M."/>
            <person name="Boyd D.H."/>
            <person name="Rubin E.J."/>
        </authorList>
    </citation>
    <scope>DISRUPTION PHENOTYPE</scope>
    <source>
        <strain>ATCC 25618 / H37Rv</strain>
    </source>
</reference>
<reference key="3">
    <citation type="journal article" date="2008" name="BMC Syst. Biol.">
        <title>targetTB: a target identification pipeline for Mycobacterium tuberculosis through an interactome, reactome and genome-scale structural analysis.</title>
        <authorList>
            <person name="Raman K."/>
            <person name="Yeturu K."/>
            <person name="Chandra N."/>
        </authorList>
    </citation>
    <scope>IDENTIFICATION AS A DRUG TARGET [LARGE SCALE ANALYSIS]</scope>
</reference>
<reference key="4">
    <citation type="journal article" date="2008" name="J. Bacteriol.">
        <title>Functional analysis of the Mycobacterium tuberculosis FAD-dependent thymidylate synthase, ThyX, reveals new amino acid residues contributing to an extended ThyX motif.</title>
        <authorList>
            <person name="Ulmer J.E."/>
            <person name="Boum Y."/>
            <person name="Thouvenel C.D."/>
            <person name="Myllykallio H."/>
            <person name="Sibley C.H."/>
        </authorList>
    </citation>
    <scope>MUTAGENESIS STUDY</scope>
    <scope>SUBUNIT</scope>
    <source>
        <strain>H37Rv</strain>
    </source>
</reference>
<reference key="5">
    <citation type="journal article" date="2008" name="PLoS ONE">
        <title>Kinetics and ligand-binding preferences of Mycobacterium tuberculosis thymidylate synthases, ThyA and ThyX.</title>
        <authorList>
            <person name="Hunter J.H."/>
            <person name="Gujjar R."/>
            <person name="Pang C.K."/>
            <person name="Rathod P.K."/>
        </authorList>
    </citation>
    <scope>FUNCTION</scope>
    <scope>CATALYTIC ACTIVITY</scope>
    <scope>BIOPHYSICOCHEMICAL PROPERTIES</scope>
    <scope>ACTIVITY REGULATION</scope>
    <scope>SUBUNIT</scope>
</reference>
<reference key="6">
    <citation type="journal article" date="2011" name="J. Med. Chem.">
        <title>Synthesis and evaluation of 5-substituted 2'-deoxyuridine monophosphate analogues as inhibitors of flavin-dependent thymidylate synthase in Mycobacterium tuberculosis.</title>
        <authorList>
            <person name="Koegler M."/>
            <person name="Vanderhoydonck B."/>
            <person name="De Jonghe S."/>
            <person name="Rozenski J."/>
            <person name="Van Belle K."/>
            <person name="Herman J."/>
            <person name="Louat T."/>
            <person name="Parchina A."/>
            <person name="Sibley C."/>
            <person name="Lescrinier E."/>
            <person name="Herdewijn P."/>
        </authorList>
    </citation>
    <scope>ACTIVITY REGULATION</scope>
</reference>
<reference key="7">
    <citation type="journal article" date="2011" name="Mol. Cell. Proteomics">
        <title>Proteogenomic analysis of Mycobacterium tuberculosis by high resolution mass spectrometry.</title>
        <authorList>
            <person name="Kelkar D.S."/>
            <person name="Kumar D."/>
            <person name="Kumar P."/>
            <person name="Balakrishnan L."/>
            <person name="Muthusamy B."/>
            <person name="Yadav A.K."/>
            <person name="Shrivastava P."/>
            <person name="Marimuthu A."/>
            <person name="Anand S."/>
            <person name="Sundaram H."/>
            <person name="Kingsbury R."/>
            <person name="Harsha H.C."/>
            <person name="Nair B."/>
            <person name="Prasad T.S."/>
            <person name="Chauhan D.S."/>
            <person name="Katoch K."/>
            <person name="Katoch V.M."/>
            <person name="Kumar P."/>
            <person name="Chaerkady R."/>
            <person name="Ramachandran S."/>
            <person name="Dash D."/>
            <person name="Pandey A."/>
        </authorList>
    </citation>
    <scope>IDENTIFICATION BY MASS SPECTROMETRY [LARGE SCALE ANALYSIS]</scope>
    <source>
        <strain>ATCC 25618 / H37Rv</strain>
    </source>
</reference>
<reference key="8">
    <citation type="journal article" date="2012" name="Microbiology">
        <title>Mycobacterium tuberculosis thymidylate synthase gene thyX is essential and potentially bifunctional, while thyA deletion confers resistance to p-aminosalicylic acid.</title>
        <authorList>
            <person name="Fivian-Hughes A.S."/>
            <person name="Houghton J."/>
            <person name="Davis E.O."/>
        </authorList>
    </citation>
    <scope>INDUCTION</scope>
    <scope>DISRUPTION PHENOTYPE</scope>
    <source>
        <strain>H37Rv</strain>
    </source>
</reference>
<reference key="9">
    <citation type="journal article" date="2005" name="J. Mol. Biol.">
        <title>Structure of the Mycobacterium tuberculosis flavin dependent thymidylate synthase (MtbThyX) at 2.0A resolution.</title>
        <authorList>
            <person name="Sampathkumar P."/>
            <person name="Turley S."/>
            <person name="Ulmer J.E."/>
            <person name="Rhie H.G."/>
            <person name="Sibley C.H."/>
            <person name="Hol W.G."/>
        </authorList>
    </citation>
    <scope>X-RAY CRYSTALLOGRAPHY (2.01 ANGSTROMS) OF DOUBLE MUTANT MET-65/MET-175 IN COMPLEX WITH THE SUBSTRATE ANALOG 5-BROMO-2'-DEOXYURIDINE-5'-MONOPHOSPHATE AND FAD</scope>
    <scope>FUNCTION</scope>
    <scope>COFACTOR</scope>
    <scope>SUBUNIT</scope>
    <scope>MUTAGENESIS OF ILE-65; HIS-69; ARG-95; SER-105; TYR-108; LYS-165; ARG-168 AND LEU-175</scope>
    <source>
        <strain>H37Rv</strain>
    </source>
</reference>
<reference key="10">
    <citation type="journal article" date="2006" name="J. Mol. Biol.">
        <title>NADP+ expels both the co-factor and a substrate analog from the Mycobacterium tuberculosis ThyX active site: opportunities for anti-bacterial drug design.</title>
        <authorList>
            <person name="Sampathkumar P."/>
            <person name="Turley S."/>
            <person name="Sibley C.H."/>
            <person name="Hol W.G."/>
        </authorList>
    </citation>
    <scope>X-RAY CRYSTALLOGRAPHY (2.10 ANGSTROMS) OF DOUBLE MUTANT MET-65/MET-175 IN COMPLEX WITH NADP</scope>
    <source>
        <strain>H37Rv</strain>
    </source>
</reference>
<reference key="11">
    <citation type="journal article" date="2015" name="Tuberculosis">
        <title>Increasing the structural coverage of tuberculosis drug targets.</title>
        <authorList>
            <person name="Baugh L."/>
            <person name="Phan I."/>
            <person name="Begley D.W."/>
            <person name="Clifton M.C."/>
            <person name="Armour B."/>
            <person name="Dranow D.M."/>
            <person name="Taylor B.M."/>
            <person name="Muruthi M.M."/>
            <person name="Abendroth J."/>
            <person name="Fairman J.W."/>
            <person name="Fox D. III"/>
            <person name="Dieterich S.H."/>
            <person name="Staker B.L."/>
            <person name="Gardberg A.S."/>
            <person name="Choi R."/>
            <person name="Hewitt S.N."/>
            <person name="Napuli A.J."/>
            <person name="Myers J."/>
            <person name="Barrett L.K."/>
            <person name="Zhang Y."/>
            <person name="Ferrell M."/>
            <person name="Mundt E."/>
            <person name="Thompkins K."/>
            <person name="Tran N."/>
            <person name="Lyons-Abbott S."/>
            <person name="Abramov A."/>
            <person name="Sekar A."/>
            <person name="Serbzhinskiy D."/>
            <person name="Lorimer D."/>
            <person name="Buchko G.W."/>
            <person name="Stacy R."/>
            <person name="Stewart L.J."/>
            <person name="Edwards T.E."/>
            <person name="Van Voorhis W.C."/>
            <person name="Myler P.J."/>
        </authorList>
    </citation>
    <scope>X-RAY CRYSTALLOGRAPHY (1.90 ANGSTROMS) IN COMPLEX WITH FAD AND 5-FLUORO-2'-DEOXYURIDINE-5'-MONOPHOSPHATE</scope>
</reference>
<name>THYX_MYCTU</name>
<dbReference type="EC" id="2.1.1.148" evidence="7"/>
<dbReference type="EMBL" id="AL123456">
    <property type="protein sequence ID" value="CCP45553.1"/>
    <property type="molecule type" value="Genomic_DNA"/>
</dbReference>
<dbReference type="PIR" id="A70880">
    <property type="entry name" value="A70880"/>
</dbReference>
<dbReference type="RefSeq" id="NP_217270.1">
    <property type="nucleotide sequence ID" value="NC_000962.3"/>
</dbReference>
<dbReference type="RefSeq" id="WP_003899465.1">
    <property type="nucleotide sequence ID" value="NZ_NVQJ01000020.1"/>
</dbReference>
<dbReference type="PDB" id="2AF6">
    <property type="method" value="X-ray"/>
    <property type="resolution" value="2.01 A"/>
    <property type="chains" value="A/B/C/D/E/F/G/H=1-250"/>
</dbReference>
<dbReference type="PDB" id="2GQ2">
    <property type="method" value="X-ray"/>
    <property type="resolution" value="2.10 A"/>
    <property type="chains" value="A/B/C/D=1-250"/>
</dbReference>
<dbReference type="PDB" id="3GWC">
    <property type="method" value="X-ray"/>
    <property type="resolution" value="1.90 A"/>
    <property type="chains" value="A/B/C/D/E/F/G/H=1-250"/>
</dbReference>
<dbReference type="PDB" id="3HZG">
    <property type="method" value="X-ray"/>
    <property type="resolution" value="2.45 A"/>
    <property type="chains" value="A/B/C/D=1-250"/>
</dbReference>
<dbReference type="PDBsum" id="2AF6"/>
<dbReference type="PDBsum" id="2GQ2"/>
<dbReference type="PDBsum" id="3GWC"/>
<dbReference type="PDBsum" id="3HZG"/>
<dbReference type="SMR" id="P9WG57"/>
<dbReference type="FunCoup" id="P9WG57">
    <property type="interactions" value="36"/>
</dbReference>
<dbReference type="STRING" id="83332.Rv2754c"/>
<dbReference type="BindingDB" id="P9WG57"/>
<dbReference type="ChEMBL" id="CHEMBL1795161"/>
<dbReference type="PaxDb" id="83332-Rv2754c"/>
<dbReference type="DNASU" id="887766"/>
<dbReference type="GeneID" id="887766"/>
<dbReference type="KEGG" id="mtu:Rv2754c"/>
<dbReference type="KEGG" id="mtv:RVBD_2754c"/>
<dbReference type="TubercuList" id="Rv2754c"/>
<dbReference type="eggNOG" id="COG1351">
    <property type="taxonomic scope" value="Bacteria"/>
</dbReference>
<dbReference type="InParanoid" id="P9WG57"/>
<dbReference type="OrthoDB" id="9780625at2"/>
<dbReference type="PhylomeDB" id="P9WG57"/>
<dbReference type="BioCyc" id="MetaCyc:G185E-7003-MONOMER"/>
<dbReference type="BRENDA" id="2.1.1.148">
    <property type="organism ID" value="3445"/>
</dbReference>
<dbReference type="UniPathway" id="UPA00575"/>
<dbReference type="EvolutionaryTrace" id="P9WG57"/>
<dbReference type="PRO" id="PR:P9WG57"/>
<dbReference type="Proteomes" id="UP000001584">
    <property type="component" value="Chromosome"/>
</dbReference>
<dbReference type="GO" id="GO:0050660">
    <property type="term" value="F:flavin adenine dinucleotide binding"/>
    <property type="evidence" value="ECO:0000314"/>
    <property type="project" value="MTBBASE"/>
</dbReference>
<dbReference type="GO" id="GO:0070402">
    <property type="term" value="F:NADPH binding"/>
    <property type="evidence" value="ECO:0000314"/>
    <property type="project" value="MTBBASE"/>
</dbReference>
<dbReference type="GO" id="GO:0050797">
    <property type="term" value="F:thymidylate synthase (FAD) activity"/>
    <property type="evidence" value="ECO:0000314"/>
    <property type="project" value="MTBBASE"/>
</dbReference>
<dbReference type="GO" id="GO:0004799">
    <property type="term" value="F:thymidylate synthase activity"/>
    <property type="evidence" value="ECO:0000314"/>
    <property type="project" value="MTBBASE"/>
</dbReference>
<dbReference type="GO" id="GO:0006231">
    <property type="term" value="P:dTMP biosynthetic process"/>
    <property type="evidence" value="ECO:0000318"/>
    <property type="project" value="GO_Central"/>
</dbReference>
<dbReference type="GO" id="GO:0006235">
    <property type="term" value="P:dTTP biosynthetic process"/>
    <property type="evidence" value="ECO:0007669"/>
    <property type="project" value="UniProtKB-UniRule"/>
</dbReference>
<dbReference type="GO" id="GO:0032259">
    <property type="term" value="P:methylation"/>
    <property type="evidence" value="ECO:0007669"/>
    <property type="project" value="UniProtKB-KW"/>
</dbReference>
<dbReference type="CDD" id="cd20175">
    <property type="entry name" value="ThyX"/>
    <property type="match status" value="1"/>
</dbReference>
<dbReference type="Gene3D" id="3.30.1360.170">
    <property type="match status" value="1"/>
</dbReference>
<dbReference type="HAMAP" id="MF_01408">
    <property type="entry name" value="ThyX"/>
    <property type="match status" value="1"/>
</dbReference>
<dbReference type="InterPro" id="IPR003669">
    <property type="entry name" value="Thymidylate_synthase_ThyX"/>
</dbReference>
<dbReference type="InterPro" id="IPR036098">
    <property type="entry name" value="Thymidylate_synthase_ThyX_sf"/>
</dbReference>
<dbReference type="NCBIfam" id="TIGR02170">
    <property type="entry name" value="thyX"/>
    <property type="match status" value="1"/>
</dbReference>
<dbReference type="PANTHER" id="PTHR34934">
    <property type="entry name" value="FLAVIN-DEPENDENT THYMIDYLATE SYNTHASE"/>
    <property type="match status" value="1"/>
</dbReference>
<dbReference type="PANTHER" id="PTHR34934:SF1">
    <property type="entry name" value="FLAVIN-DEPENDENT THYMIDYLATE SYNTHASE"/>
    <property type="match status" value="1"/>
</dbReference>
<dbReference type="Pfam" id="PF02511">
    <property type="entry name" value="Thy1"/>
    <property type="match status" value="1"/>
</dbReference>
<dbReference type="SUPFAM" id="SSF69796">
    <property type="entry name" value="Thymidylate synthase-complementing protein Thy1"/>
    <property type="match status" value="1"/>
</dbReference>
<dbReference type="PROSITE" id="PS51331">
    <property type="entry name" value="THYX"/>
    <property type="match status" value="1"/>
</dbReference>
<evidence type="ECO:0000255" key="1">
    <source>
        <dbReference type="HAMAP-Rule" id="MF_01408"/>
    </source>
</evidence>
<evidence type="ECO:0000255" key="2">
    <source>
        <dbReference type="PROSITE-ProRule" id="PRU00661"/>
    </source>
</evidence>
<evidence type="ECO:0000269" key="3">
    <source>
    </source>
</evidence>
<evidence type="ECO:0000269" key="4">
    <source>
    </source>
</evidence>
<evidence type="ECO:0000269" key="5">
    <source>
    </source>
</evidence>
<evidence type="ECO:0000269" key="6">
    <source>
    </source>
</evidence>
<evidence type="ECO:0000269" key="7">
    <source>
    </source>
</evidence>
<evidence type="ECO:0000269" key="8">
    <source>
    </source>
</evidence>
<evidence type="ECO:0000269" key="9">
    <source>
    </source>
</evidence>
<evidence type="ECO:0000303" key="10">
    <source>
    </source>
</evidence>
<evidence type="ECO:0000303" key="11">
    <source>
    </source>
</evidence>
<evidence type="ECO:0000303" key="12">
    <source>
    </source>
</evidence>
<evidence type="ECO:0000303" key="13">
    <source>
    </source>
</evidence>
<evidence type="ECO:0000303" key="14">
    <source>
    </source>
</evidence>
<evidence type="ECO:0000305" key="15">
    <source>
    </source>
</evidence>
<evidence type="ECO:0000305" key="16">
    <source>
    </source>
</evidence>
<evidence type="ECO:0000305" key="17">
    <source>
    </source>
</evidence>
<evidence type="ECO:0007744" key="18">
    <source>
        <dbReference type="PDB" id="2AF6"/>
    </source>
</evidence>
<evidence type="ECO:0007744" key="19">
    <source>
        <dbReference type="PDB" id="3GWC"/>
    </source>
</evidence>
<evidence type="ECO:0007744" key="20">
    <source>
        <dbReference type="PDB" id="3HZG"/>
    </source>
</evidence>
<evidence type="ECO:0007829" key="21">
    <source>
        <dbReference type="PDB" id="2GQ2"/>
    </source>
</evidence>
<evidence type="ECO:0007829" key="22">
    <source>
        <dbReference type="PDB" id="3GWC"/>
    </source>
</evidence>
<evidence type="ECO:0007829" key="23">
    <source>
        <dbReference type="PDB" id="3HZG"/>
    </source>
</evidence>
<organism>
    <name type="scientific">Mycobacterium tuberculosis (strain ATCC 25618 / H37Rv)</name>
    <dbReference type="NCBI Taxonomy" id="83332"/>
    <lineage>
        <taxon>Bacteria</taxon>
        <taxon>Bacillati</taxon>
        <taxon>Actinomycetota</taxon>
        <taxon>Actinomycetes</taxon>
        <taxon>Mycobacteriales</taxon>
        <taxon>Mycobacteriaceae</taxon>
        <taxon>Mycobacterium</taxon>
        <taxon>Mycobacterium tuberculosis complex</taxon>
    </lineage>
</organism>
<sequence>MAETAPLRVQLIAKTDFLAPPDVPWTTDADGGPALVEFAGRACYQSWSKPNPKTATNAGYLRHIIDVGHFSVLEHASVSFYITGISRSCTHELIRHRHFSYSQLSQRYVPEKDSRVVVPPGMEDDADLRHILTEAADAARATYSELLAKLEAKFADQPNAILRRKQARQAARAVLPNATETRIVVTGNYRAWRHFIAMRASEHADVEIRRLAIECLRQLAAVAPAVFADFEVTTLADGTEVATSPLATEA</sequence>
<comment type="function">
    <text evidence="3 4 7 9">Catalyzes the reductive methylation of 2'-deoxyuridine-5'-monophosphate (dUMP) to 2'-deoxythymidine-5'-monophosphate (dTMP) while utilizing 5,10-methylenetetrahydrofolate (mTHF) as the methyl donor, and NADPH and FADH(2) as the reductant (PubMed:18493582). Is essential for growth of the pathogen on solid media in vitro; the essential function is something other than dTMP synthase (PubMed:12657046, PubMed:22034487).</text>
</comment>
<comment type="catalytic activity">
    <reaction evidence="7">
        <text>dUMP + (6R)-5,10-methylene-5,6,7,8-tetrahydrofolate + NADPH + H(+) = dTMP + (6S)-5,6,7,8-tetrahydrofolate + NADP(+)</text>
        <dbReference type="Rhea" id="RHEA:29043"/>
        <dbReference type="ChEBI" id="CHEBI:15378"/>
        <dbReference type="ChEBI" id="CHEBI:15636"/>
        <dbReference type="ChEBI" id="CHEBI:57453"/>
        <dbReference type="ChEBI" id="CHEBI:57783"/>
        <dbReference type="ChEBI" id="CHEBI:58349"/>
        <dbReference type="ChEBI" id="CHEBI:63528"/>
        <dbReference type="ChEBI" id="CHEBI:246422"/>
        <dbReference type="EC" id="2.1.1.148"/>
    </reaction>
</comment>
<comment type="cofactor">
    <cofactor evidence="4">
        <name>FAD</name>
        <dbReference type="ChEBI" id="CHEBI:57692"/>
    </cofactor>
    <text evidence="4">Binds 4 FAD per tetramer. Each FAD binding site is formed by three monomers.</text>
</comment>
<comment type="activity regulation">
    <text evidence="7 8">Is potently inhibited by 5-fluoro-2'-deoxyuridine 5'-monophosphate (FdUMP), but in contrast to ThyA, is not inhibited by the folate-based 1843U89 (PubMed:18493582). A 5-alkynyl dUMP analog has been shown to highly inhibit ThyX (IC(50) value of 0.91 uM), while lacking activity against the classical mycobacterial thymidylate synthase ThyA, and therefore is a selective mycobacterial FDTS inhibitor (PubMed:21657202).</text>
</comment>
<comment type="biophysicochemical properties">
    <kinetics>
        <KM evidence="7">3 uM for dUMP</KM>
        <KM evidence="7">4 uM for 5,10-methylenetetrahydrofolate</KM>
        <KM evidence="7">47 uM for NADPH</KM>
        <text evidence="7">kcat is 0.4 min(-1).</text>
    </kinetics>
</comment>
<comment type="pathway">
    <text evidence="1">Pyrimidine metabolism; dTTP biosynthesis.</text>
</comment>
<comment type="subunit">
    <text evidence="4 6 7">Homotetramer.</text>
</comment>
<comment type="induction">
    <text evidence="9">Is expressed under the exponential phase of growth, and down-regulated upon starvation. Expression of thyX is significantly increased within murine macrophages or under acid stress. Is expressed at a lower level than thyA under all of the in vitro and in vivo growth conditions tested.</text>
</comment>
<comment type="disruption phenotype">
    <text evidence="3 9">Cells lacking this gene display impaired growth (PubMed:12657046). Strains with a thyX deletion could not be obtained (PubMed:22034487).</text>
</comment>
<comment type="miscellaneous">
    <text evidence="17">Was identified as a high-confidence drug target.</text>
</comment>
<comment type="miscellaneous">
    <text evidence="5 16">Crystallographic studies have shown that NADPH/NADP(+) binding expels both FAD and dUMP from the active site, by competing for the binding site (PubMed:16730023). However, the location of NADPH binding might not be biologically relevant (PubMed:18192395).</text>
</comment>
<comment type="similarity">
    <text evidence="1">Belongs to the thymidylate synthase ThyX family.</text>
</comment>
<gene>
    <name evidence="10" type="primary">thyX</name>
    <name type="ordered locus">Rv2754c</name>
    <name type="ORF">MTV002.19c</name>
</gene>
<feature type="chain" id="PRO_0000175570" description="Flavin-dependent thymidylate synthase">
    <location>
        <begin position="1"/>
        <end position="250"/>
    </location>
</feature>
<feature type="domain" description="ThyX" evidence="2">
    <location>
        <begin position="7"/>
        <end position="233"/>
    </location>
</feature>
<feature type="short sequence motif" description="ThyX motif" evidence="1">
    <location>
        <begin position="95"/>
        <end position="105"/>
    </location>
</feature>
<feature type="active site" description="Involved in ionization of N3 of dUMP, leading to its activation" evidence="1">
    <location>
        <position position="199"/>
    </location>
</feature>
<feature type="binding site" evidence="4 18 19 20">
    <location>
        <position position="71"/>
    </location>
    <ligand>
        <name>FAD</name>
        <dbReference type="ChEBI" id="CHEBI:57692"/>
        <note>ligand shared between neighboring subunits</note>
    </ligand>
</feature>
<feature type="binding site" description="in other chain" evidence="15 18">
    <location>
        <position position="87"/>
    </location>
    <ligand>
        <name>dUMP</name>
        <dbReference type="ChEBI" id="CHEBI:246422"/>
        <note>ligand shared between dimeric partners</note>
    </ligand>
</feature>
<feature type="binding site" evidence="15 18">
    <location>
        <begin position="92"/>
        <end position="95"/>
    </location>
    <ligand>
        <name>dUMP</name>
        <dbReference type="ChEBI" id="CHEBI:246422"/>
        <note>ligand shared between dimeric partners</note>
    </ligand>
</feature>
<feature type="binding site" evidence="4 18 19 20">
    <location>
        <begin position="95"/>
        <end position="97"/>
    </location>
    <ligand>
        <name>FAD</name>
        <dbReference type="ChEBI" id="CHEBI:57692"/>
        <note>ligand shared between neighboring subunits</note>
    </ligand>
</feature>
<feature type="binding site" description="in other chain" evidence="15 18">
    <location>
        <begin position="103"/>
        <end position="107"/>
    </location>
    <ligand>
        <name>dUMP</name>
        <dbReference type="ChEBI" id="CHEBI:246422"/>
        <note>ligand shared between dimeric partners</note>
    </ligand>
</feature>
<feature type="binding site" evidence="4 18 19 20">
    <location>
        <position position="103"/>
    </location>
    <ligand>
        <name>FAD</name>
        <dbReference type="ChEBI" id="CHEBI:57692"/>
        <note>ligand shared between neighboring subunits</note>
    </ligand>
</feature>
<feature type="binding site" description="in other chain" evidence="15 18">
    <location>
        <position position="172"/>
    </location>
    <ligand>
        <name>dUMP</name>
        <dbReference type="ChEBI" id="CHEBI:246422"/>
        <note>ligand shared between dimeric partners</note>
    </ligand>
</feature>
<feature type="binding site" evidence="4 18 19 20">
    <location>
        <begin position="188"/>
        <end position="190"/>
    </location>
    <ligand>
        <name>FAD</name>
        <dbReference type="ChEBI" id="CHEBI:57692"/>
        <note>ligand shared between neighboring subunits</note>
    </ligand>
</feature>
<feature type="binding site" evidence="4 18 19 20">
    <location>
        <position position="194"/>
    </location>
    <ligand>
        <name>FAD</name>
        <dbReference type="ChEBI" id="CHEBI:57692"/>
        <note>ligand shared between neighboring subunits</note>
    </ligand>
</feature>
<feature type="binding site" evidence="15 18">
    <location>
        <position position="199"/>
    </location>
    <ligand>
        <name>dUMP</name>
        <dbReference type="ChEBI" id="CHEBI:246422"/>
        <note>ligand shared between dimeric partners</note>
    </ligand>
</feature>
<feature type="mutagenesis site" description="Still able to complement an E.coli thyA deletion mutant." evidence="4">
    <original>I</original>
    <variation>M</variation>
    <location>
        <position position="65"/>
    </location>
</feature>
<feature type="mutagenesis site" description="Loss of catalytic activity since it is not able to complement an E.coli thyA deletion mutant." evidence="4">
    <original>H</original>
    <variation>E</variation>
    <location>
        <position position="69"/>
    </location>
</feature>
<feature type="mutagenesis site" description="Loss of catalytic activity since it is not able to complement an E.coli thyA deletion mutant." evidence="4">
    <original>R</original>
    <variation>A</variation>
    <variation>D</variation>
    <location>
        <position position="95"/>
    </location>
</feature>
<feature type="mutagenesis site" description="Still able to complement an E.coli thyA deletion mutant." evidence="4">
    <original>R</original>
    <variation>K</variation>
    <location>
        <position position="95"/>
    </location>
</feature>
<feature type="mutagenesis site" description="Loss of catalytic activity since it is not able to complement an E.coli thyA deletion mutant." evidence="4">
    <original>S</original>
    <variation>E</variation>
    <location>
        <position position="105"/>
    </location>
</feature>
<feature type="mutagenesis site" description="Still able to complement an E.coli thyA deletion mutant." evidence="4">
    <original>Y</original>
    <variation>F</variation>
    <location>
        <position position="108"/>
    </location>
</feature>
<feature type="mutagenesis site" description="Loss of catalytic activity since it is not able to complement an E.coli thyA deletion mutant." evidence="4">
    <original>K</original>
    <variation>A</variation>
    <location>
        <position position="165"/>
    </location>
</feature>
<feature type="mutagenesis site" description="Loss of catalytic activity since it is not able to complement an E.coli thyA deletion mutant." evidence="4">
    <original>R</original>
    <variation>A</variation>
    <location>
        <position position="168"/>
    </location>
</feature>
<feature type="mutagenesis site" description="Still able to complement an E.coli thyA deletion mutant." evidence="4">
    <original>L</original>
    <variation>M</variation>
    <location>
        <position position="175"/>
    </location>
</feature>
<feature type="strand" evidence="22">
    <location>
        <begin position="8"/>
        <end position="17"/>
    </location>
</feature>
<feature type="helix" evidence="22">
    <location>
        <begin position="31"/>
        <end position="44"/>
    </location>
</feature>
<feature type="helix" evidence="22">
    <location>
        <begin position="52"/>
        <end position="54"/>
    </location>
</feature>
<feature type="helix" evidence="22">
    <location>
        <begin position="57"/>
        <end position="66"/>
    </location>
</feature>
<feature type="helix" evidence="22">
    <location>
        <begin position="70"/>
        <end position="75"/>
    </location>
</feature>
<feature type="strand" evidence="22">
    <location>
        <begin position="77"/>
        <end position="86"/>
    </location>
</feature>
<feature type="helix" evidence="22">
    <location>
        <begin position="87"/>
        <end position="93"/>
    </location>
</feature>
<feature type="strand" evidence="22">
    <location>
        <begin position="99"/>
        <end position="103"/>
    </location>
</feature>
<feature type="turn" evidence="22">
    <location>
        <begin position="106"/>
        <end position="108"/>
    </location>
</feature>
<feature type="strand" evidence="21">
    <location>
        <begin position="111"/>
        <end position="113"/>
    </location>
</feature>
<feature type="helix" evidence="22">
    <location>
        <begin position="120"/>
        <end position="122"/>
    </location>
</feature>
<feature type="helix" evidence="22">
    <location>
        <begin position="126"/>
        <end position="154"/>
    </location>
</feature>
<feature type="helix" evidence="22">
    <location>
        <begin position="160"/>
        <end position="171"/>
    </location>
</feature>
<feature type="helix" evidence="22">
    <location>
        <begin position="172"/>
        <end position="174"/>
    </location>
</feature>
<feature type="strand" evidence="22">
    <location>
        <begin position="179"/>
        <end position="188"/>
    </location>
</feature>
<feature type="helix" evidence="22">
    <location>
        <begin position="189"/>
        <end position="199"/>
    </location>
</feature>
<feature type="strand" evidence="23">
    <location>
        <begin position="200"/>
        <end position="204"/>
    </location>
</feature>
<feature type="helix" evidence="22">
    <location>
        <begin position="206"/>
        <end position="222"/>
    </location>
</feature>
<feature type="turn" evidence="22">
    <location>
        <begin position="224"/>
        <end position="226"/>
    </location>
</feature>
<feature type="strand" evidence="22">
    <location>
        <begin position="231"/>
        <end position="234"/>
    </location>
</feature>
<feature type="strand" evidence="22">
    <location>
        <begin position="240"/>
        <end position="243"/>
    </location>
</feature>